<keyword id="KW-0687">Ribonucleoprotein</keyword>
<keyword id="KW-0689">Ribosomal protein</keyword>
<proteinExistence type="inferred from homology"/>
<evidence type="ECO:0000255" key="1">
    <source>
        <dbReference type="HAMAP-Rule" id="MF_00402"/>
    </source>
</evidence>
<evidence type="ECO:0000305" key="2"/>
<reference key="1">
    <citation type="journal article" date="2009" name="Infect. Immun.">
        <title>Comparative genomics reveal extensive transposon-mediated genomic plasticity and diversity among potential effector proteins within the genus Coxiella.</title>
        <authorList>
            <person name="Beare P.A."/>
            <person name="Unsworth N."/>
            <person name="Andoh M."/>
            <person name="Voth D.E."/>
            <person name="Omsland A."/>
            <person name="Gilk S.D."/>
            <person name="Williams K.P."/>
            <person name="Sobral B.W."/>
            <person name="Kupko J.J. III"/>
            <person name="Porcella S.F."/>
            <person name="Samuel J.E."/>
            <person name="Heinzen R.A."/>
        </authorList>
    </citation>
    <scope>NUCLEOTIDE SEQUENCE [LARGE SCALE GENOMIC DNA]</scope>
    <source>
        <strain>CbuG_Q212</strain>
    </source>
</reference>
<dbReference type="EMBL" id="CP001019">
    <property type="protein sequence ID" value="ACJ18863.1"/>
    <property type="molecule type" value="Genomic_DNA"/>
</dbReference>
<dbReference type="RefSeq" id="WP_005771383.1">
    <property type="nucleotide sequence ID" value="NC_011527.1"/>
</dbReference>
<dbReference type="SMR" id="B6J1N5"/>
<dbReference type="KEGG" id="cbg:CbuG_1569"/>
<dbReference type="HOGENOM" id="CLU_103507_2_1_6"/>
<dbReference type="GO" id="GO:0022625">
    <property type="term" value="C:cytosolic large ribosomal subunit"/>
    <property type="evidence" value="ECO:0007669"/>
    <property type="project" value="TreeGrafter"/>
</dbReference>
<dbReference type="GO" id="GO:0003735">
    <property type="term" value="F:structural constituent of ribosome"/>
    <property type="evidence" value="ECO:0007669"/>
    <property type="project" value="InterPro"/>
</dbReference>
<dbReference type="GO" id="GO:0006412">
    <property type="term" value="P:translation"/>
    <property type="evidence" value="ECO:0007669"/>
    <property type="project" value="UniProtKB-UniRule"/>
</dbReference>
<dbReference type="FunFam" id="2.30.30.790:FF:000001">
    <property type="entry name" value="50S ribosomal protein L19"/>
    <property type="match status" value="1"/>
</dbReference>
<dbReference type="Gene3D" id="2.30.30.790">
    <property type="match status" value="1"/>
</dbReference>
<dbReference type="HAMAP" id="MF_00402">
    <property type="entry name" value="Ribosomal_bL19"/>
    <property type="match status" value="1"/>
</dbReference>
<dbReference type="InterPro" id="IPR001857">
    <property type="entry name" value="Ribosomal_bL19"/>
</dbReference>
<dbReference type="InterPro" id="IPR018257">
    <property type="entry name" value="Ribosomal_bL19_CS"/>
</dbReference>
<dbReference type="InterPro" id="IPR038657">
    <property type="entry name" value="Ribosomal_bL19_sf"/>
</dbReference>
<dbReference type="InterPro" id="IPR008991">
    <property type="entry name" value="Translation_prot_SH3-like_sf"/>
</dbReference>
<dbReference type="NCBIfam" id="TIGR01024">
    <property type="entry name" value="rplS_bact"/>
    <property type="match status" value="1"/>
</dbReference>
<dbReference type="PANTHER" id="PTHR15680:SF9">
    <property type="entry name" value="LARGE RIBOSOMAL SUBUNIT PROTEIN BL19M"/>
    <property type="match status" value="1"/>
</dbReference>
<dbReference type="PANTHER" id="PTHR15680">
    <property type="entry name" value="RIBOSOMAL PROTEIN L19"/>
    <property type="match status" value="1"/>
</dbReference>
<dbReference type="Pfam" id="PF01245">
    <property type="entry name" value="Ribosomal_L19"/>
    <property type="match status" value="1"/>
</dbReference>
<dbReference type="PIRSF" id="PIRSF002191">
    <property type="entry name" value="Ribosomal_L19"/>
    <property type="match status" value="1"/>
</dbReference>
<dbReference type="PRINTS" id="PR00061">
    <property type="entry name" value="RIBOSOMALL19"/>
</dbReference>
<dbReference type="SUPFAM" id="SSF50104">
    <property type="entry name" value="Translation proteins SH3-like domain"/>
    <property type="match status" value="1"/>
</dbReference>
<dbReference type="PROSITE" id="PS01015">
    <property type="entry name" value="RIBOSOMAL_L19"/>
    <property type="match status" value="1"/>
</dbReference>
<sequence length="115" mass="13275">MNNIIQLLETEQTQGKEIPDFRAGDTVTVQVKVKEGNRERLQAFEGVVIARRHRGLNSSFTVRKVSHGEGVERVFQLYSPLIASIKVNRRGDVRRAKLYYLRNLRGRKAKIKEKI</sequence>
<gene>
    <name evidence="1" type="primary">rplS</name>
    <name type="ordered locus">CbuG_1569</name>
</gene>
<feature type="chain" id="PRO_1000193816" description="Large ribosomal subunit protein bL19">
    <location>
        <begin position="1"/>
        <end position="115"/>
    </location>
</feature>
<accession>B6J1N5</accession>
<organism>
    <name type="scientific">Coxiella burnetii (strain CbuG_Q212)</name>
    <name type="common">Coxiella burnetii (strain Q212)</name>
    <dbReference type="NCBI Taxonomy" id="434923"/>
    <lineage>
        <taxon>Bacteria</taxon>
        <taxon>Pseudomonadati</taxon>
        <taxon>Pseudomonadota</taxon>
        <taxon>Gammaproteobacteria</taxon>
        <taxon>Legionellales</taxon>
        <taxon>Coxiellaceae</taxon>
        <taxon>Coxiella</taxon>
    </lineage>
</organism>
<protein>
    <recommendedName>
        <fullName evidence="1">Large ribosomal subunit protein bL19</fullName>
    </recommendedName>
    <alternativeName>
        <fullName evidence="2">50S ribosomal protein L19</fullName>
    </alternativeName>
</protein>
<name>RL19_COXB2</name>
<comment type="function">
    <text evidence="1">This protein is located at the 30S-50S ribosomal subunit interface and may play a role in the structure and function of the aminoacyl-tRNA binding site.</text>
</comment>
<comment type="similarity">
    <text evidence="1">Belongs to the bacterial ribosomal protein bL19 family.</text>
</comment>